<comment type="function">
    <text evidence="1">Catalyzes the conversion of uracil and 5-phospho-alpha-D-ribose 1-diphosphate (PRPP) to UMP and diphosphate.</text>
</comment>
<comment type="catalytic activity">
    <reaction evidence="1">
        <text>UMP + diphosphate = 5-phospho-alpha-D-ribose 1-diphosphate + uracil</text>
        <dbReference type="Rhea" id="RHEA:13017"/>
        <dbReference type="ChEBI" id="CHEBI:17568"/>
        <dbReference type="ChEBI" id="CHEBI:33019"/>
        <dbReference type="ChEBI" id="CHEBI:57865"/>
        <dbReference type="ChEBI" id="CHEBI:58017"/>
        <dbReference type="EC" id="2.4.2.9"/>
    </reaction>
</comment>
<comment type="cofactor">
    <cofactor evidence="1">
        <name>Mg(2+)</name>
        <dbReference type="ChEBI" id="CHEBI:18420"/>
    </cofactor>
    <text evidence="1">Binds 1 Mg(2+) ion per subunit. The magnesium is bound as Mg-PRPP.</text>
</comment>
<comment type="activity regulation">
    <text evidence="1">Allosterically activated by GTP.</text>
</comment>
<comment type="pathway">
    <text evidence="1">Pyrimidine metabolism; UMP biosynthesis via salvage pathway; UMP from uracil: step 1/1.</text>
</comment>
<comment type="similarity">
    <text evidence="1">Belongs to the UPRTase family.</text>
</comment>
<evidence type="ECO:0000255" key="1">
    <source>
        <dbReference type="HAMAP-Rule" id="MF_01218"/>
    </source>
</evidence>
<gene>
    <name evidence="1" type="primary">upp</name>
    <name type="ordered locus">YN1551_0939</name>
</gene>
<sequence length="216" mass="24128">MPLYVIDKPLTLHILTQLRDKNTDQINFRKNLVRLGRILGYEIANTLDYEIVEVETPLGARTKGIDITDLNNIVIINILRAAVPLVEGLLKAFPKARQGVIGASRVEVDGKEVPKDMDVYIYYKKIPNIRAKVDNVIIADPMIATASTMLKVLEEVVRANPKRIYIVSIISSEYGANKILSKYPFIYLFTVTIDPELNNKGYILPGLGDAGDRAFG</sequence>
<accession>C3NFT0</accession>
<feature type="chain" id="PRO_1000213943" description="Uracil phosphoribosyltransferase">
    <location>
        <begin position="1"/>
        <end position="216"/>
    </location>
</feature>
<feature type="binding site" evidence="1">
    <location>
        <begin position="30"/>
        <end position="34"/>
    </location>
    <ligand>
        <name>GTP</name>
        <dbReference type="ChEBI" id="CHEBI:37565"/>
    </ligand>
</feature>
<feature type="binding site" evidence="1">
    <location>
        <position position="80"/>
    </location>
    <ligand>
        <name>5-phospho-alpha-D-ribose 1-diphosphate</name>
        <dbReference type="ChEBI" id="CHEBI:58017"/>
    </ligand>
</feature>
<feature type="binding site" evidence="1">
    <location>
        <position position="105"/>
    </location>
    <ligand>
        <name>5-phospho-alpha-D-ribose 1-diphosphate</name>
        <dbReference type="ChEBI" id="CHEBI:58017"/>
    </ligand>
</feature>
<feature type="binding site" evidence="1">
    <location>
        <begin position="140"/>
        <end position="148"/>
    </location>
    <ligand>
        <name>5-phospho-alpha-D-ribose 1-diphosphate</name>
        <dbReference type="ChEBI" id="CHEBI:58017"/>
    </ligand>
</feature>
<feature type="binding site" evidence="1">
    <location>
        <position position="203"/>
    </location>
    <ligand>
        <name>uracil</name>
        <dbReference type="ChEBI" id="CHEBI:17568"/>
    </ligand>
</feature>
<feature type="binding site" evidence="1">
    <location>
        <begin position="208"/>
        <end position="210"/>
    </location>
    <ligand>
        <name>uracil</name>
        <dbReference type="ChEBI" id="CHEBI:17568"/>
    </ligand>
</feature>
<feature type="binding site" evidence="1">
    <location>
        <position position="209"/>
    </location>
    <ligand>
        <name>5-phospho-alpha-D-ribose 1-diphosphate</name>
        <dbReference type="ChEBI" id="CHEBI:58017"/>
    </ligand>
</feature>
<organism>
    <name type="scientific">Saccharolobus islandicus (strain Y.N.15.51 / Yellowstone #2)</name>
    <name type="common">Sulfolobus islandicus</name>
    <dbReference type="NCBI Taxonomy" id="419942"/>
    <lineage>
        <taxon>Archaea</taxon>
        <taxon>Thermoproteota</taxon>
        <taxon>Thermoprotei</taxon>
        <taxon>Sulfolobales</taxon>
        <taxon>Sulfolobaceae</taxon>
        <taxon>Saccharolobus</taxon>
    </lineage>
</organism>
<keyword id="KW-0021">Allosteric enzyme</keyword>
<keyword id="KW-0328">Glycosyltransferase</keyword>
<keyword id="KW-0342">GTP-binding</keyword>
<keyword id="KW-0460">Magnesium</keyword>
<keyword id="KW-0547">Nucleotide-binding</keyword>
<keyword id="KW-0808">Transferase</keyword>
<name>UPP_SACI1</name>
<protein>
    <recommendedName>
        <fullName evidence="1">Uracil phosphoribosyltransferase</fullName>
        <ecNumber evidence="1">2.4.2.9</ecNumber>
    </recommendedName>
    <alternativeName>
        <fullName evidence="1">UMP pyrophosphorylase</fullName>
    </alternativeName>
    <alternativeName>
        <fullName evidence="1">UPRTase</fullName>
    </alternativeName>
</protein>
<reference key="1">
    <citation type="journal article" date="2009" name="Proc. Natl. Acad. Sci. U.S.A.">
        <title>Biogeography of the Sulfolobus islandicus pan-genome.</title>
        <authorList>
            <person name="Reno M.L."/>
            <person name="Held N.L."/>
            <person name="Fields C.J."/>
            <person name="Burke P.V."/>
            <person name="Whitaker R.J."/>
        </authorList>
    </citation>
    <scope>NUCLEOTIDE SEQUENCE [LARGE SCALE GENOMIC DNA]</scope>
    <source>
        <strain>Y.N.15.51 / Yellowstone #2</strain>
    </source>
</reference>
<proteinExistence type="inferred from homology"/>
<dbReference type="EC" id="2.4.2.9" evidence="1"/>
<dbReference type="EMBL" id="CP001404">
    <property type="protein sequence ID" value="ACP48048.1"/>
    <property type="molecule type" value="Genomic_DNA"/>
</dbReference>
<dbReference type="RefSeq" id="WP_012711878.1">
    <property type="nucleotide sequence ID" value="NC_012623.1"/>
</dbReference>
<dbReference type="SMR" id="C3NFT0"/>
<dbReference type="GeneID" id="84059260"/>
<dbReference type="KEGG" id="sin:YN1551_0939"/>
<dbReference type="HOGENOM" id="CLU_067096_2_0_2"/>
<dbReference type="UniPathway" id="UPA00574">
    <property type="reaction ID" value="UER00636"/>
</dbReference>
<dbReference type="Proteomes" id="UP000006818">
    <property type="component" value="Chromosome"/>
</dbReference>
<dbReference type="GO" id="GO:0005525">
    <property type="term" value="F:GTP binding"/>
    <property type="evidence" value="ECO:0007669"/>
    <property type="project" value="UniProtKB-KW"/>
</dbReference>
<dbReference type="GO" id="GO:0000287">
    <property type="term" value="F:magnesium ion binding"/>
    <property type="evidence" value="ECO:0007669"/>
    <property type="project" value="UniProtKB-UniRule"/>
</dbReference>
<dbReference type="GO" id="GO:0004845">
    <property type="term" value="F:uracil phosphoribosyltransferase activity"/>
    <property type="evidence" value="ECO:0007669"/>
    <property type="project" value="UniProtKB-UniRule"/>
</dbReference>
<dbReference type="GO" id="GO:0044206">
    <property type="term" value="P:UMP salvage"/>
    <property type="evidence" value="ECO:0007669"/>
    <property type="project" value="UniProtKB-UniRule"/>
</dbReference>
<dbReference type="GO" id="GO:0006223">
    <property type="term" value="P:uracil salvage"/>
    <property type="evidence" value="ECO:0007669"/>
    <property type="project" value="InterPro"/>
</dbReference>
<dbReference type="CDD" id="cd06223">
    <property type="entry name" value="PRTases_typeI"/>
    <property type="match status" value="1"/>
</dbReference>
<dbReference type="Gene3D" id="3.40.50.2020">
    <property type="match status" value="1"/>
</dbReference>
<dbReference type="HAMAP" id="MF_01218_A">
    <property type="entry name" value="Upp_A"/>
    <property type="match status" value="1"/>
</dbReference>
<dbReference type="InterPro" id="IPR000836">
    <property type="entry name" value="PRibTrfase_dom"/>
</dbReference>
<dbReference type="InterPro" id="IPR029057">
    <property type="entry name" value="PRTase-like"/>
</dbReference>
<dbReference type="InterPro" id="IPR034331">
    <property type="entry name" value="Upp_A"/>
</dbReference>
<dbReference type="InterPro" id="IPR005765">
    <property type="entry name" value="Ura_phspho_trans"/>
</dbReference>
<dbReference type="NCBIfam" id="NF001097">
    <property type="entry name" value="PRK00129.1"/>
    <property type="match status" value="1"/>
</dbReference>
<dbReference type="NCBIfam" id="TIGR01091">
    <property type="entry name" value="upp"/>
    <property type="match status" value="1"/>
</dbReference>
<dbReference type="Pfam" id="PF14681">
    <property type="entry name" value="UPRTase"/>
    <property type="match status" value="1"/>
</dbReference>
<dbReference type="SUPFAM" id="SSF53271">
    <property type="entry name" value="PRTase-like"/>
    <property type="match status" value="1"/>
</dbReference>